<reference key="1">
    <citation type="journal article" date="2000" name="Nature">
        <title>Sequence and analysis of chromosome 1 of the plant Arabidopsis thaliana.</title>
        <authorList>
            <person name="Theologis A."/>
            <person name="Ecker J.R."/>
            <person name="Palm C.J."/>
            <person name="Federspiel N.A."/>
            <person name="Kaul S."/>
            <person name="White O."/>
            <person name="Alonso J."/>
            <person name="Altafi H."/>
            <person name="Araujo R."/>
            <person name="Bowman C.L."/>
            <person name="Brooks S.Y."/>
            <person name="Buehler E."/>
            <person name="Chan A."/>
            <person name="Chao Q."/>
            <person name="Chen H."/>
            <person name="Cheuk R.F."/>
            <person name="Chin C.W."/>
            <person name="Chung M.K."/>
            <person name="Conn L."/>
            <person name="Conway A.B."/>
            <person name="Conway A.R."/>
            <person name="Creasy T.H."/>
            <person name="Dewar K."/>
            <person name="Dunn P."/>
            <person name="Etgu P."/>
            <person name="Feldblyum T.V."/>
            <person name="Feng J.-D."/>
            <person name="Fong B."/>
            <person name="Fujii C.Y."/>
            <person name="Gill J.E."/>
            <person name="Goldsmith A.D."/>
            <person name="Haas B."/>
            <person name="Hansen N.F."/>
            <person name="Hughes B."/>
            <person name="Huizar L."/>
            <person name="Hunter J.L."/>
            <person name="Jenkins J."/>
            <person name="Johnson-Hopson C."/>
            <person name="Khan S."/>
            <person name="Khaykin E."/>
            <person name="Kim C.J."/>
            <person name="Koo H.L."/>
            <person name="Kremenetskaia I."/>
            <person name="Kurtz D.B."/>
            <person name="Kwan A."/>
            <person name="Lam B."/>
            <person name="Langin-Hooper S."/>
            <person name="Lee A."/>
            <person name="Lee J.M."/>
            <person name="Lenz C.A."/>
            <person name="Li J.H."/>
            <person name="Li Y.-P."/>
            <person name="Lin X."/>
            <person name="Liu S.X."/>
            <person name="Liu Z.A."/>
            <person name="Luros J.S."/>
            <person name="Maiti R."/>
            <person name="Marziali A."/>
            <person name="Militscher J."/>
            <person name="Miranda M."/>
            <person name="Nguyen M."/>
            <person name="Nierman W.C."/>
            <person name="Osborne B.I."/>
            <person name="Pai G."/>
            <person name="Peterson J."/>
            <person name="Pham P.K."/>
            <person name="Rizzo M."/>
            <person name="Rooney T."/>
            <person name="Rowley D."/>
            <person name="Sakano H."/>
            <person name="Salzberg S.L."/>
            <person name="Schwartz J.R."/>
            <person name="Shinn P."/>
            <person name="Southwick A.M."/>
            <person name="Sun H."/>
            <person name="Tallon L.J."/>
            <person name="Tambunga G."/>
            <person name="Toriumi M.J."/>
            <person name="Town C.D."/>
            <person name="Utterback T."/>
            <person name="Van Aken S."/>
            <person name="Vaysberg M."/>
            <person name="Vysotskaia V.S."/>
            <person name="Walker M."/>
            <person name="Wu D."/>
            <person name="Yu G."/>
            <person name="Fraser C.M."/>
            <person name="Venter J.C."/>
            <person name="Davis R.W."/>
        </authorList>
    </citation>
    <scope>NUCLEOTIDE SEQUENCE [LARGE SCALE GENOMIC DNA]</scope>
    <source>
        <strain>cv. Columbia</strain>
    </source>
</reference>
<reference key="2">
    <citation type="journal article" date="2017" name="Plant J.">
        <title>Araport11: a complete reannotation of the Arabidopsis thaliana reference genome.</title>
        <authorList>
            <person name="Cheng C.Y."/>
            <person name="Krishnakumar V."/>
            <person name="Chan A.P."/>
            <person name="Thibaud-Nissen F."/>
            <person name="Schobel S."/>
            <person name="Town C.D."/>
        </authorList>
    </citation>
    <scope>GENOME REANNOTATION</scope>
    <source>
        <strain>cv. Columbia</strain>
    </source>
</reference>
<dbReference type="EMBL" id="AC008263">
    <property type="protein sequence ID" value="AAD55295.1"/>
    <property type="molecule type" value="Genomic_DNA"/>
</dbReference>
<dbReference type="EMBL" id="AC013258">
    <property type="protein sequence ID" value="AAG51913.1"/>
    <property type="status" value="ALT_SEQ"/>
    <property type="molecule type" value="Genomic_DNA"/>
</dbReference>
<dbReference type="EMBL" id="CP002684">
    <property type="protein sequence ID" value="AEE35634.1"/>
    <property type="molecule type" value="Genomic_DNA"/>
</dbReference>
<dbReference type="EMBL" id="CP002684">
    <property type="protein sequence ID" value="ANM60047.1"/>
    <property type="molecule type" value="Genomic_DNA"/>
</dbReference>
<dbReference type="EMBL" id="CP002684">
    <property type="protein sequence ID" value="ANM60050.1"/>
    <property type="molecule type" value="Genomic_DNA"/>
</dbReference>
<dbReference type="PIR" id="E96777">
    <property type="entry name" value="E96777"/>
</dbReference>
<dbReference type="RefSeq" id="NP_001319383.1">
    <property type="nucleotide sequence ID" value="NM_001334667.1"/>
</dbReference>
<dbReference type="RefSeq" id="NP_001322360.1">
    <property type="nucleotide sequence ID" value="NM_001334672.1"/>
</dbReference>
<dbReference type="RefSeq" id="NP_177619.2">
    <property type="nucleotide sequence ID" value="NM_106139.3"/>
</dbReference>
<dbReference type="SMR" id="Q9SSG5"/>
<dbReference type="BioGRID" id="29039">
    <property type="interactions" value="1"/>
</dbReference>
<dbReference type="FunCoup" id="Q9SSG5">
    <property type="interactions" value="521"/>
</dbReference>
<dbReference type="IntAct" id="Q9SSG5">
    <property type="interactions" value="1"/>
</dbReference>
<dbReference type="STRING" id="3702.Q9SSG5"/>
<dbReference type="PaxDb" id="3702-AT1G74810.1"/>
<dbReference type="ProteomicsDB" id="240551"/>
<dbReference type="EnsemblPlants" id="AT1G74810.1">
    <property type="protein sequence ID" value="AT1G74810.1"/>
    <property type="gene ID" value="AT1G74810"/>
</dbReference>
<dbReference type="EnsemblPlants" id="AT1G74810.4">
    <property type="protein sequence ID" value="AT1G74810.4"/>
    <property type="gene ID" value="AT1G74810"/>
</dbReference>
<dbReference type="EnsemblPlants" id="AT1G74810.7">
    <property type="protein sequence ID" value="AT1G74810.7"/>
    <property type="gene ID" value="AT1G74810"/>
</dbReference>
<dbReference type="GeneID" id="843820"/>
<dbReference type="Gramene" id="AT1G74810.1">
    <property type="protein sequence ID" value="AT1G74810.1"/>
    <property type="gene ID" value="AT1G74810"/>
</dbReference>
<dbReference type="Gramene" id="AT1G74810.4">
    <property type="protein sequence ID" value="AT1G74810.4"/>
    <property type="gene ID" value="AT1G74810"/>
</dbReference>
<dbReference type="Gramene" id="AT1G74810.7">
    <property type="protein sequence ID" value="AT1G74810.7"/>
    <property type="gene ID" value="AT1G74810"/>
</dbReference>
<dbReference type="KEGG" id="ath:AT1G74810"/>
<dbReference type="Araport" id="AT1G74810"/>
<dbReference type="TAIR" id="AT1G74810">
    <property type="gene designation" value="BOR5"/>
</dbReference>
<dbReference type="eggNOG" id="KOG1172">
    <property type="taxonomic scope" value="Eukaryota"/>
</dbReference>
<dbReference type="HOGENOM" id="CLU_002289_3_2_1"/>
<dbReference type="InParanoid" id="Q9SSG5"/>
<dbReference type="OMA" id="FMETEAT"/>
<dbReference type="PhylomeDB" id="Q9SSG5"/>
<dbReference type="PRO" id="PR:Q9SSG5"/>
<dbReference type="Proteomes" id="UP000006548">
    <property type="component" value="Chromosome 1"/>
</dbReference>
<dbReference type="ExpressionAtlas" id="Q9SSG5">
    <property type="expression patterns" value="baseline and differential"/>
</dbReference>
<dbReference type="GO" id="GO:0016020">
    <property type="term" value="C:membrane"/>
    <property type="evidence" value="ECO:0007669"/>
    <property type="project" value="UniProtKB-SubCell"/>
</dbReference>
<dbReference type="GO" id="GO:0005452">
    <property type="term" value="F:solute:inorganic anion antiporter activity"/>
    <property type="evidence" value="ECO:0007669"/>
    <property type="project" value="InterPro"/>
</dbReference>
<dbReference type="GO" id="GO:0006820">
    <property type="term" value="P:monoatomic anion transport"/>
    <property type="evidence" value="ECO:0007669"/>
    <property type="project" value="InterPro"/>
</dbReference>
<dbReference type="Gene3D" id="1.10.287.570">
    <property type="entry name" value="Helical hairpin bin"/>
    <property type="match status" value="1"/>
</dbReference>
<dbReference type="InterPro" id="IPR011531">
    <property type="entry name" value="HCO3_transpt-like_TM_dom"/>
</dbReference>
<dbReference type="InterPro" id="IPR003020">
    <property type="entry name" value="HCO3_transpt_euk"/>
</dbReference>
<dbReference type="PANTHER" id="PTHR11453">
    <property type="entry name" value="ANION EXCHANGE PROTEIN"/>
    <property type="match status" value="1"/>
</dbReference>
<dbReference type="PANTHER" id="PTHR11453:SF40">
    <property type="entry name" value="BORON TRANSPORTER 4-RELATED"/>
    <property type="match status" value="1"/>
</dbReference>
<dbReference type="Pfam" id="PF00955">
    <property type="entry name" value="HCO3_cotransp"/>
    <property type="match status" value="3"/>
</dbReference>
<keyword id="KW-0039">Anion exchange</keyword>
<keyword id="KW-0406">Ion transport</keyword>
<keyword id="KW-0472">Membrane</keyword>
<keyword id="KW-1185">Reference proteome</keyword>
<keyword id="KW-0812">Transmembrane</keyword>
<keyword id="KW-1133">Transmembrane helix</keyword>
<keyword id="KW-0813">Transport</keyword>
<proteinExistence type="inferred from homology"/>
<feature type="chain" id="PRO_0000079241" description="Putative boron transporter 5">
    <location>
        <begin position="1"/>
        <end position="683"/>
    </location>
</feature>
<feature type="topological domain" description="Cytoplasmic" evidence="2">
    <location>
        <begin position="1"/>
        <end position="38"/>
    </location>
</feature>
<feature type="transmembrane region" description="Helical" evidence="2">
    <location>
        <begin position="39"/>
        <end position="59"/>
    </location>
</feature>
<feature type="topological domain" description="Extracellular" evidence="2">
    <location>
        <begin position="60"/>
        <end position="80"/>
    </location>
</feature>
<feature type="transmembrane region" description="Helical" evidence="2">
    <location>
        <begin position="81"/>
        <end position="101"/>
    </location>
</feature>
<feature type="topological domain" description="Cytoplasmic" evidence="2">
    <location>
        <begin position="102"/>
        <end position="126"/>
    </location>
</feature>
<feature type="transmembrane region" description="Helical" evidence="2">
    <location>
        <begin position="127"/>
        <end position="147"/>
    </location>
</feature>
<feature type="topological domain" description="Extracellular" evidence="2">
    <location>
        <begin position="148"/>
        <end position="158"/>
    </location>
</feature>
<feature type="transmembrane region" description="Helical" evidence="2">
    <location>
        <begin position="159"/>
        <end position="179"/>
    </location>
</feature>
<feature type="topological domain" description="Cytoplasmic" evidence="2">
    <location>
        <begin position="180"/>
        <end position="200"/>
    </location>
</feature>
<feature type="transmembrane region" description="Helical" evidence="2">
    <location>
        <begin position="201"/>
        <end position="221"/>
    </location>
</feature>
<feature type="topological domain" description="Extracellular" evidence="2">
    <location>
        <begin position="222"/>
        <end position="238"/>
    </location>
</feature>
<feature type="transmembrane region" description="Helical" evidence="2">
    <location>
        <begin position="239"/>
        <end position="259"/>
    </location>
</feature>
<feature type="topological domain" description="Cytoplasmic" evidence="2">
    <location>
        <begin position="260"/>
        <end position="294"/>
    </location>
</feature>
<feature type="transmembrane region" description="Helical" evidence="2">
    <location>
        <begin position="295"/>
        <end position="315"/>
    </location>
</feature>
<feature type="topological domain" description="Extracellular" evidence="2">
    <location>
        <begin position="316"/>
        <end position="335"/>
    </location>
</feature>
<feature type="transmembrane region" description="Helical" evidence="2">
    <location>
        <begin position="336"/>
        <end position="356"/>
    </location>
</feature>
<feature type="topological domain" description="Cytoplasmic" evidence="2">
    <location>
        <begin position="357"/>
        <end position="477"/>
    </location>
</feature>
<feature type="transmembrane region" description="Helical" evidence="2">
    <location>
        <begin position="478"/>
        <end position="498"/>
    </location>
</feature>
<feature type="topological domain" description="Extracellular" evidence="2">
    <location>
        <begin position="499"/>
        <end position="565"/>
    </location>
</feature>
<feature type="transmembrane region" description="Helical" evidence="2">
    <location>
        <begin position="566"/>
        <end position="586"/>
    </location>
</feature>
<feature type="topological domain" description="Cytoplasmic" evidence="2">
    <location>
        <begin position="587"/>
        <end position="683"/>
    </location>
</feature>
<protein>
    <recommendedName>
        <fullName>Putative boron transporter 5</fullName>
    </recommendedName>
</protein>
<sequence>MEEERVEGSKRPFQGIIRDVKGRALCYKQDWIAGLRSGFGILAPTTYVFFASALPVIAFGEQLSHDTERSLSTVETLASTALCGVIHSLLGGQPLLILGVAEPTVLMYKYLYDFAKGRPELGKQLYLAWVAWVCVWTALLLFLMAIFNMAYIINRFTRIAGELFGMLIAVLFLQQTIKGMVSEFRIPKGEDSKLEKYQFEWLYTNGLLGLIFTVGLVYTALKSRKARSWPYGTGCCRSFVADYGVPLMVVVWTALSFSTPSKLPSGVPRRLVSPLPWDSVSLTHWTVIKDMGKVSPGYIFAAFIPALMIAGLYFFDHSVVSQLAQQKEFNLKNPSAYHYDILLLGFMVLICGMLGLPPSNGVLPQSPMHTKSLAVFKRQLMRRKMVMTAKESIRQKATSSQVYEDMEQVFIEMDKSPLAETHTTLINELQDLKEAVMKKSDDDGDTGEESGFDPEKHVDAYLPVRVNEQRVSNLLQSLLVIGAVFALPVIKLIPTSLLWGYFAYMAIDSLPDNQFFERTVLLFVPPTRRFKVLEGAHASFVEKVPHKSIAAFTLFQILYFGLCYGVTWIPVAGIMFPVLFFLLVAIRQYLLPKLFKPAYLRELDAAEYEEIPGTPRNPLELSFRSNNSARGVQECDAEILDELTTSRGELKVRTLGHNEDKGHQIYPKEIVEVGDGDMSSSRE</sequence>
<accession>Q9SSG5</accession>
<accession>Q9C9P1</accession>
<comment type="function">
    <text evidence="1">Putative boron transporter. Boron is essential for maintaining the integrity of plants cell walls (By similarity).</text>
</comment>
<comment type="subcellular location">
    <subcellularLocation>
        <location evidence="1">Membrane</location>
        <topology evidence="1">Multi-pass membrane protein</topology>
    </subcellularLocation>
</comment>
<comment type="similarity">
    <text evidence="3">Belongs to the anion exchanger (TC 2.A.31.3) family.</text>
</comment>
<comment type="sequence caution" evidence="3">
    <conflict type="erroneous gene model prediction">
        <sequence resource="EMBL-CDS" id="AAG51913"/>
    </conflict>
</comment>
<gene>
    <name type="primary">BOR5</name>
    <name type="ordered locus">At1g74810</name>
    <name type="ORF">F25A4.22</name>
    <name type="ORF">F9E10.34</name>
</gene>
<name>BOR5_ARATH</name>
<organism>
    <name type="scientific">Arabidopsis thaliana</name>
    <name type="common">Mouse-ear cress</name>
    <dbReference type="NCBI Taxonomy" id="3702"/>
    <lineage>
        <taxon>Eukaryota</taxon>
        <taxon>Viridiplantae</taxon>
        <taxon>Streptophyta</taxon>
        <taxon>Embryophyta</taxon>
        <taxon>Tracheophyta</taxon>
        <taxon>Spermatophyta</taxon>
        <taxon>Magnoliopsida</taxon>
        <taxon>eudicotyledons</taxon>
        <taxon>Gunneridae</taxon>
        <taxon>Pentapetalae</taxon>
        <taxon>rosids</taxon>
        <taxon>malvids</taxon>
        <taxon>Brassicales</taxon>
        <taxon>Brassicaceae</taxon>
        <taxon>Camelineae</taxon>
        <taxon>Arabidopsis</taxon>
    </lineage>
</organism>
<evidence type="ECO:0000250" key="1"/>
<evidence type="ECO:0000255" key="2"/>
<evidence type="ECO:0000305" key="3"/>